<gene>
    <name evidence="1" type="primary">hypA</name>
    <name type="ordered locus">Cagg_0468</name>
</gene>
<sequence>MHELSIAHNIVNIASAAAAEAGTEEISAVYLRIGALAGVVADALRFSFAIAAEGTPLANAELIIEEVPVTVFCPTCNTEVTLPNPRLFRCPHCGRPCGQIIHGRELELVALETP</sequence>
<organism>
    <name type="scientific">Chloroflexus aggregans (strain MD-66 / DSM 9485)</name>
    <dbReference type="NCBI Taxonomy" id="326427"/>
    <lineage>
        <taxon>Bacteria</taxon>
        <taxon>Bacillati</taxon>
        <taxon>Chloroflexota</taxon>
        <taxon>Chloroflexia</taxon>
        <taxon>Chloroflexales</taxon>
        <taxon>Chloroflexineae</taxon>
        <taxon>Chloroflexaceae</taxon>
        <taxon>Chloroflexus</taxon>
    </lineage>
</organism>
<evidence type="ECO:0000255" key="1">
    <source>
        <dbReference type="HAMAP-Rule" id="MF_00213"/>
    </source>
</evidence>
<keyword id="KW-0479">Metal-binding</keyword>
<keyword id="KW-0533">Nickel</keyword>
<keyword id="KW-0862">Zinc</keyword>
<dbReference type="EMBL" id="CP001337">
    <property type="protein sequence ID" value="ACL23409.1"/>
    <property type="molecule type" value="Genomic_DNA"/>
</dbReference>
<dbReference type="RefSeq" id="WP_012615775.1">
    <property type="nucleotide sequence ID" value="NC_011831.1"/>
</dbReference>
<dbReference type="SMR" id="B8G3M6"/>
<dbReference type="STRING" id="326427.Cagg_0468"/>
<dbReference type="KEGG" id="cag:Cagg_0468"/>
<dbReference type="eggNOG" id="COG0375">
    <property type="taxonomic scope" value="Bacteria"/>
</dbReference>
<dbReference type="HOGENOM" id="CLU_126929_1_0_0"/>
<dbReference type="OrthoDB" id="9800361at2"/>
<dbReference type="Proteomes" id="UP000002508">
    <property type="component" value="Chromosome"/>
</dbReference>
<dbReference type="GO" id="GO:0016151">
    <property type="term" value="F:nickel cation binding"/>
    <property type="evidence" value="ECO:0007669"/>
    <property type="project" value="UniProtKB-UniRule"/>
</dbReference>
<dbReference type="GO" id="GO:0008270">
    <property type="term" value="F:zinc ion binding"/>
    <property type="evidence" value="ECO:0007669"/>
    <property type="project" value="UniProtKB-UniRule"/>
</dbReference>
<dbReference type="GO" id="GO:0051604">
    <property type="term" value="P:protein maturation"/>
    <property type="evidence" value="ECO:0007669"/>
    <property type="project" value="InterPro"/>
</dbReference>
<dbReference type="GO" id="GO:0036211">
    <property type="term" value="P:protein modification process"/>
    <property type="evidence" value="ECO:0007669"/>
    <property type="project" value="UniProtKB-UniRule"/>
</dbReference>
<dbReference type="Gene3D" id="3.30.2320.80">
    <property type="match status" value="1"/>
</dbReference>
<dbReference type="HAMAP" id="MF_00213">
    <property type="entry name" value="HypA_HybF"/>
    <property type="match status" value="1"/>
</dbReference>
<dbReference type="InterPro" id="IPR020538">
    <property type="entry name" value="Hydgase_Ni_incorp_HypA/HybF_CS"/>
</dbReference>
<dbReference type="InterPro" id="IPR000688">
    <property type="entry name" value="HypA/HybF"/>
</dbReference>
<dbReference type="NCBIfam" id="TIGR00100">
    <property type="entry name" value="hypA"/>
    <property type="match status" value="1"/>
</dbReference>
<dbReference type="PANTHER" id="PTHR34535">
    <property type="entry name" value="HYDROGENASE MATURATION FACTOR HYPA"/>
    <property type="match status" value="1"/>
</dbReference>
<dbReference type="PANTHER" id="PTHR34535:SF3">
    <property type="entry name" value="HYDROGENASE MATURATION FACTOR HYPA"/>
    <property type="match status" value="1"/>
</dbReference>
<dbReference type="Pfam" id="PF01155">
    <property type="entry name" value="HypA"/>
    <property type="match status" value="1"/>
</dbReference>
<dbReference type="PIRSF" id="PIRSF004761">
    <property type="entry name" value="Hydrgn_mat_HypA"/>
    <property type="match status" value="1"/>
</dbReference>
<dbReference type="PROSITE" id="PS01249">
    <property type="entry name" value="HYPA"/>
    <property type="match status" value="1"/>
</dbReference>
<reference key="1">
    <citation type="submission" date="2008-12" db="EMBL/GenBank/DDBJ databases">
        <title>Complete sequence of Chloroflexus aggregans DSM 9485.</title>
        <authorList>
            <consortium name="US DOE Joint Genome Institute"/>
            <person name="Lucas S."/>
            <person name="Copeland A."/>
            <person name="Lapidus A."/>
            <person name="Glavina del Rio T."/>
            <person name="Dalin E."/>
            <person name="Tice H."/>
            <person name="Pitluck S."/>
            <person name="Foster B."/>
            <person name="Larimer F."/>
            <person name="Land M."/>
            <person name="Hauser L."/>
            <person name="Kyrpides N."/>
            <person name="Mikhailova N."/>
            <person name="Bryant D.A."/>
            <person name="Richardson P."/>
        </authorList>
    </citation>
    <scope>NUCLEOTIDE SEQUENCE [LARGE SCALE GENOMIC DNA]</scope>
    <source>
        <strain>MD-66 / DSM 9485</strain>
    </source>
</reference>
<name>HYPA_CHLAD</name>
<feature type="chain" id="PRO_1000124772" description="Hydrogenase maturation factor HypA">
    <location>
        <begin position="1"/>
        <end position="114"/>
    </location>
</feature>
<feature type="binding site" evidence="1">
    <location>
        <position position="2"/>
    </location>
    <ligand>
        <name>Ni(2+)</name>
        <dbReference type="ChEBI" id="CHEBI:49786"/>
    </ligand>
</feature>
<feature type="binding site" evidence="1">
    <location>
        <position position="73"/>
    </location>
    <ligand>
        <name>Zn(2+)</name>
        <dbReference type="ChEBI" id="CHEBI:29105"/>
    </ligand>
</feature>
<feature type="binding site" evidence="1">
    <location>
        <position position="76"/>
    </location>
    <ligand>
        <name>Zn(2+)</name>
        <dbReference type="ChEBI" id="CHEBI:29105"/>
    </ligand>
</feature>
<feature type="binding site" evidence="1">
    <location>
        <position position="90"/>
    </location>
    <ligand>
        <name>Zn(2+)</name>
        <dbReference type="ChEBI" id="CHEBI:29105"/>
    </ligand>
</feature>
<feature type="binding site" evidence="1">
    <location>
        <position position="93"/>
    </location>
    <ligand>
        <name>Zn(2+)</name>
        <dbReference type="ChEBI" id="CHEBI:29105"/>
    </ligand>
</feature>
<protein>
    <recommendedName>
        <fullName evidence="1">Hydrogenase maturation factor HypA</fullName>
    </recommendedName>
</protein>
<accession>B8G3M6</accession>
<proteinExistence type="inferred from homology"/>
<comment type="function">
    <text evidence="1">Involved in the maturation of [NiFe] hydrogenases. Required for nickel insertion into the metal center of the hydrogenase.</text>
</comment>
<comment type="similarity">
    <text evidence="1">Belongs to the HypA/HybF family.</text>
</comment>